<keyword id="KW-0007">Acetylation</keyword>
<keyword id="KW-0186">Copper</keyword>
<keyword id="KW-0479">Metal-binding</keyword>
<keyword id="KW-0480">Metal-thiolate cluster</keyword>
<keyword id="KW-0597">Phosphoprotein</keyword>
<keyword id="KW-1185">Reference proteome</keyword>
<keyword id="KW-0862">Zinc</keyword>
<reference key="1">
    <citation type="submission" date="2005-07" db="EMBL/GenBank/DDBJ databases">
        <title>Analysis of gene expression in cynomolgus monkey tissues by macaque cDNA oligo-chips.</title>
        <authorList>
            <person name="Kobayashi M."/>
            <person name="Tanuma R."/>
            <person name="Hirata M."/>
            <person name="Osada N."/>
            <person name="Kusuda J."/>
            <person name="Sugano S."/>
            <person name="Hashimoto K."/>
        </authorList>
    </citation>
    <scope>NUCLEOTIDE SEQUENCE [LARGE SCALE MRNA]</scope>
    <source>
        <tissue>Brain cortex</tissue>
    </source>
</reference>
<feature type="chain" id="PRO_0000253581" description="Metallothionein-3">
    <location>
        <begin position="1"/>
        <end position="68"/>
    </location>
</feature>
<feature type="region of interest" description="Beta">
    <location>
        <begin position="1"/>
        <end position="30"/>
    </location>
</feature>
<feature type="region of interest" description="Alpha">
    <location>
        <begin position="31"/>
        <end position="68"/>
    </location>
</feature>
<feature type="binding site" evidence="2">
    <location>
        <position position="6"/>
    </location>
    <ligand>
        <name>a divalent metal cation</name>
        <dbReference type="ChEBI" id="CHEBI:60240"/>
        <label>1</label>
        <note>in cluster B</note>
    </ligand>
</feature>
<feature type="binding site" evidence="2">
    <location>
        <position position="8"/>
    </location>
    <ligand>
        <name>a divalent metal cation</name>
        <dbReference type="ChEBI" id="CHEBI:60240"/>
        <label>1</label>
        <note>in cluster B</note>
    </ligand>
</feature>
<feature type="binding site" evidence="2">
    <location>
        <position position="8"/>
    </location>
    <ligand>
        <name>a divalent metal cation</name>
        <dbReference type="ChEBI" id="CHEBI:60240"/>
        <label>2</label>
        <note>in cluster B</note>
    </ligand>
</feature>
<feature type="binding site" evidence="2">
    <location>
        <position position="14"/>
    </location>
    <ligand>
        <name>a divalent metal cation</name>
        <dbReference type="ChEBI" id="CHEBI:60240"/>
        <label>2</label>
        <note>in cluster B</note>
    </ligand>
</feature>
<feature type="binding site" evidence="2">
    <location>
        <position position="16"/>
    </location>
    <ligand>
        <name>a divalent metal cation</name>
        <dbReference type="ChEBI" id="CHEBI:60240"/>
        <label>2</label>
        <note>in cluster B</note>
    </ligand>
</feature>
<feature type="binding site" evidence="2">
    <location>
        <position position="16"/>
    </location>
    <ligand>
        <name>a divalent metal cation</name>
        <dbReference type="ChEBI" id="CHEBI:60240"/>
        <label>3</label>
        <note>in cluster B</note>
    </ligand>
</feature>
<feature type="binding site" evidence="2">
    <location>
        <position position="20"/>
    </location>
    <ligand>
        <name>a divalent metal cation</name>
        <dbReference type="ChEBI" id="CHEBI:60240"/>
        <label>3</label>
        <note>in cluster B</note>
    </ligand>
</feature>
<feature type="binding site" evidence="2">
    <location>
        <position position="22"/>
    </location>
    <ligand>
        <name>a divalent metal cation</name>
        <dbReference type="ChEBI" id="CHEBI:60240"/>
        <label>1</label>
        <note>in cluster B</note>
    </ligand>
</feature>
<feature type="binding site" evidence="2">
    <location>
        <position position="25"/>
    </location>
    <ligand>
        <name>a divalent metal cation</name>
        <dbReference type="ChEBI" id="CHEBI:60240"/>
        <label>1</label>
        <note>in cluster B</note>
    </ligand>
</feature>
<feature type="binding site" evidence="2">
    <location>
        <position position="25"/>
    </location>
    <ligand>
        <name>a divalent metal cation</name>
        <dbReference type="ChEBI" id="CHEBI:60240"/>
        <label>3</label>
        <note>in cluster B</note>
    </ligand>
</feature>
<feature type="binding site" evidence="2">
    <location>
        <position position="27"/>
    </location>
    <ligand>
        <name>a divalent metal cation</name>
        <dbReference type="ChEBI" id="CHEBI:60240"/>
        <label>2</label>
        <note>in cluster B</note>
    </ligand>
</feature>
<feature type="binding site" evidence="2">
    <location>
        <position position="30"/>
    </location>
    <ligand>
        <name>a divalent metal cation</name>
        <dbReference type="ChEBI" id="CHEBI:60240"/>
        <label>3</label>
        <note>in cluster B</note>
    </ligand>
</feature>
<feature type="binding site" evidence="2">
    <location>
        <position position="34"/>
    </location>
    <ligand>
        <name>a divalent metal cation</name>
        <dbReference type="ChEBI" id="CHEBI:60240"/>
        <label>4</label>
        <note>in cluster A</note>
    </ligand>
</feature>
<feature type="binding site" evidence="2">
    <location>
        <position position="35"/>
    </location>
    <ligand>
        <name>a divalent metal cation</name>
        <dbReference type="ChEBI" id="CHEBI:60240"/>
        <label>4</label>
        <note>in cluster A</note>
    </ligand>
</feature>
<feature type="binding site" evidence="2">
    <location>
        <position position="35"/>
    </location>
    <ligand>
        <name>a divalent metal cation</name>
        <dbReference type="ChEBI" id="CHEBI:60240"/>
        <label>5</label>
        <note>in cluster A</note>
    </ligand>
</feature>
<feature type="binding site" evidence="2">
    <location>
        <position position="37"/>
    </location>
    <ligand>
        <name>a divalent metal cation</name>
        <dbReference type="ChEBI" id="CHEBI:60240"/>
        <label>5</label>
        <note>in cluster A</note>
    </ligand>
</feature>
<feature type="binding site" evidence="2">
    <location>
        <position position="38"/>
    </location>
    <ligand>
        <name>a divalent metal cation</name>
        <dbReference type="ChEBI" id="CHEBI:60240"/>
        <label>5</label>
        <note>in cluster A</note>
    </ligand>
</feature>
<feature type="binding site" evidence="2">
    <location>
        <position position="38"/>
    </location>
    <ligand>
        <name>a divalent metal cation</name>
        <dbReference type="ChEBI" id="CHEBI:60240"/>
        <label>6</label>
        <note>in cluster A</note>
    </ligand>
</feature>
<feature type="binding site" evidence="2">
    <location>
        <position position="42"/>
    </location>
    <ligand>
        <name>a divalent metal cation</name>
        <dbReference type="ChEBI" id="CHEBI:60240"/>
        <label>6</label>
        <note>in cluster A</note>
    </ligand>
</feature>
<feature type="binding site" evidence="2">
    <location>
        <position position="45"/>
    </location>
    <ligand>
        <name>a divalent metal cation</name>
        <dbReference type="ChEBI" id="CHEBI:60240"/>
        <label>4</label>
        <note>in cluster A</note>
    </ligand>
</feature>
<feature type="binding site" evidence="2">
    <location>
        <position position="45"/>
    </location>
    <ligand>
        <name>a divalent metal cation</name>
        <dbReference type="ChEBI" id="CHEBI:60240"/>
        <label>6</label>
        <note>in cluster A</note>
    </ligand>
</feature>
<feature type="binding site" evidence="2">
    <location>
        <position position="49"/>
    </location>
    <ligand>
        <name>a divalent metal cation</name>
        <dbReference type="ChEBI" id="CHEBI:60240"/>
        <label>4</label>
        <note>in cluster A</note>
    </ligand>
</feature>
<feature type="binding site" evidence="2">
    <location>
        <position position="51"/>
    </location>
    <ligand>
        <name>a divalent metal cation</name>
        <dbReference type="ChEBI" id="CHEBI:60240"/>
        <label>5</label>
        <note>in cluster A</note>
    </ligand>
</feature>
<feature type="binding site" evidence="2">
    <location>
        <position position="51"/>
    </location>
    <ligand>
        <name>a divalent metal cation</name>
        <dbReference type="ChEBI" id="CHEBI:60240"/>
        <label>7</label>
        <note>in cluster A</note>
    </ligand>
</feature>
<feature type="binding site" evidence="2">
    <location>
        <position position="64"/>
    </location>
    <ligand>
        <name>a divalent metal cation</name>
        <dbReference type="ChEBI" id="CHEBI:60240"/>
        <label>7</label>
        <note>in cluster A</note>
    </ligand>
</feature>
<feature type="binding site" evidence="2">
    <location>
        <position position="66"/>
    </location>
    <ligand>
        <name>a divalent metal cation</name>
        <dbReference type="ChEBI" id="CHEBI:60240"/>
        <label>7</label>
        <note>in cluster A</note>
    </ligand>
</feature>
<feature type="binding site" evidence="2">
    <location>
        <position position="67"/>
    </location>
    <ligand>
        <name>a divalent metal cation</name>
        <dbReference type="ChEBI" id="CHEBI:60240"/>
        <label>6</label>
        <note>in cluster A</note>
    </ligand>
</feature>
<feature type="binding site" evidence="2">
    <location>
        <position position="67"/>
    </location>
    <ligand>
        <name>a divalent metal cation</name>
        <dbReference type="ChEBI" id="CHEBI:60240"/>
        <label>7</label>
        <note>in cluster A</note>
    </ligand>
</feature>
<feature type="modified residue" description="N-acetylmethionine" evidence="4">
    <location>
        <position position="1"/>
    </location>
</feature>
<feature type="modified residue" description="Phosphoserine" evidence="3">
    <location>
        <position position="33"/>
    </location>
</feature>
<comment type="function">
    <text evidence="1">Binds heavy metals. Contains five zinc and one copper atoms per polypeptide chain and only a negligible amount of cadmium (By similarity).</text>
</comment>
<comment type="similarity">
    <text evidence="5">Belongs to the metallothionein superfamily. Type 1 family.</text>
</comment>
<evidence type="ECO:0000250" key="1"/>
<evidence type="ECO:0000250" key="2">
    <source>
        <dbReference type="UniProtKB" id="P02795"/>
    </source>
</evidence>
<evidence type="ECO:0000250" key="3">
    <source>
        <dbReference type="UniProtKB" id="P28184"/>
    </source>
</evidence>
<evidence type="ECO:0000250" key="4">
    <source>
        <dbReference type="UniProtKB" id="P37359"/>
    </source>
</evidence>
<evidence type="ECO:0000305" key="5"/>
<protein>
    <recommendedName>
        <fullName>Metallothionein-3</fullName>
        <shortName>MT-3</shortName>
    </recommendedName>
    <alternativeName>
        <fullName>Metallothionein-III</fullName>
        <shortName>MT-III</shortName>
    </alternativeName>
</protein>
<name>MT3_MACFA</name>
<organism>
    <name type="scientific">Macaca fascicularis</name>
    <name type="common">Crab-eating macaque</name>
    <name type="synonym">Cynomolgus monkey</name>
    <dbReference type="NCBI Taxonomy" id="9541"/>
    <lineage>
        <taxon>Eukaryota</taxon>
        <taxon>Metazoa</taxon>
        <taxon>Chordata</taxon>
        <taxon>Craniata</taxon>
        <taxon>Vertebrata</taxon>
        <taxon>Euteleostomi</taxon>
        <taxon>Mammalia</taxon>
        <taxon>Eutheria</taxon>
        <taxon>Euarchontoglires</taxon>
        <taxon>Primates</taxon>
        <taxon>Haplorrhini</taxon>
        <taxon>Catarrhini</taxon>
        <taxon>Cercopithecidae</taxon>
        <taxon>Cercopithecinae</taxon>
        <taxon>Macaca</taxon>
    </lineage>
</organism>
<sequence>MDPETCPCPSGGSCTCADSCKCEGCKCTSCKKSCCSCCPAECEKCAKDCVCKGGEGAEAEAEKCSCCE</sequence>
<gene>
    <name type="primary">MT3</name>
    <name type="ORF">QccE-20351</name>
</gene>
<dbReference type="EMBL" id="AB220447">
    <property type="protein sequence ID" value="BAE72980.1"/>
    <property type="molecule type" value="mRNA"/>
</dbReference>
<dbReference type="RefSeq" id="XP_005592025.1">
    <property type="nucleotide sequence ID" value="XM_005591968.4"/>
</dbReference>
<dbReference type="SMR" id="Q2PFZ0"/>
<dbReference type="STRING" id="9541.ENSMFAP00000013836"/>
<dbReference type="GeneID" id="102134329"/>
<dbReference type="KEGG" id="mcf:102134329"/>
<dbReference type="CTD" id="4504"/>
<dbReference type="eggNOG" id="KOG4738">
    <property type="taxonomic scope" value="Eukaryota"/>
</dbReference>
<dbReference type="Proteomes" id="UP000233100">
    <property type="component" value="Unplaced"/>
</dbReference>
<dbReference type="GO" id="GO:0016234">
    <property type="term" value="C:inclusion body"/>
    <property type="evidence" value="ECO:0000250"/>
    <property type="project" value="UniProtKB"/>
</dbReference>
<dbReference type="GO" id="GO:0005634">
    <property type="term" value="C:nucleus"/>
    <property type="evidence" value="ECO:0000250"/>
    <property type="project" value="UniProtKB"/>
</dbReference>
<dbReference type="GO" id="GO:0048471">
    <property type="term" value="C:perinuclear region of cytoplasm"/>
    <property type="evidence" value="ECO:0000250"/>
    <property type="project" value="UniProtKB"/>
</dbReference>
<dbReference type="GO" id="GO:0008021">
    <property type="term" value="C:synaptic vesicle"/>
    <property type="evidence" value="ECO:0000250"/>
    <property type="project" value="UniProtKB"/>
</dbReference>
<dbReference type="GO" id="GO:0046870">
    <property type="term" value="F:cadmium ion binding"/>
    <property type="evidence" value="ECO:0000250"/>
    <property type="project" value="UniProtKB"/>
</dbReference>
<dbReference type="GO" id="GO:0005507">
    <property type="term" value="F:copper ion binding"/>
    <property type="evidence" value="ECO:0000250"/>
    <property type="project" value="UniProtKB"/>
</dbReference>
<dbReference type="GO" id="GO:0140487">
    <property type="term" value="F:metal ion sequestering activity"/>
    <property type="evidence" value="ECO:0000250"/>
    <property type="project" value="UniProtKB"/>
</dbReference>
<dbReference type="GO" id="GO:0030295">
    <property type="term" value="F:protein kinase activator activity"/>
    <property type="evidence" value="ECO:0000250"/>
    <property type="project" value="UniProtKB"/>
</dbReference>
<dbReference type="GO" id="GO:0008270">
    <property type="term" value="F:zinc ion binding"/>
    <property type="evidence" value="ECO:0000250"/>
    <property type="project" value="UniProtKB"/>
</dbReference>
<dbReference type="GO" id="GO:0032148">
    <property type="term" value="P:activation of protein kinase B activity"/>
    <property type="evidence" value="ECO:0000250"/>
    <property type="project" value="UniProtKB"/>
</dbReference>
<dbReference type="GO" id="GO:1990748">
    <property type="term" value="P:cellular detoxification"/>
    <property type="evidence" value="ECO:0000250"/>
    <property type="project" value="UniProtKB"/>
</dbReference>
<dbReference type="GO" id="GO:0071276">
    <property type="term" value="P:cellular response to cadmium ion"/>
    <property type="evidence" value="ECO:0007669"/>
    <property type="project" value="TreeGrafter"/>
</dbReference>
<dbReference type="GO" id="GO:0071280">
    <property type="term" value="P:cellular response to copper ion"/>
    <property type="evidence" value="ECO:0007669"/>
    <property type="project" value="TreeGrafter"/>
</dbReference>
<dbReference type="GO" id="GO:0034614">
    <property type="term" value="P:cellular response to reactive oxygen species"/>
    <property type="evidence" value="ECO:0000250"/>
    <property type="project" value="UniProtKB"/>
</dbReference>
<dbReference type="GO" id="GO:0071294">
    <property type="term" value="P:cellular response to zinc ion"/>
    <property type="evidence" value="ECO:0007669"/>
    <property type="project" value="TreeGrafter"/>
</dbReference>
<dbReference type="GO" id="GO:0010273">
    <property type="term" value="P:detoxification of copper ion"/>
    <property type="evidence" value="ECO:0007669"/>
    <property type="project" value="TreeGrafter"/>
</dbReference>
<dbReference type="GO" id="GO:0006112">
    <property type="term" value="P:energy reserve metabolic process"/>
    <property type="evidence" value="ECO:0000250"/>
    <property type="project" value="UniProtKB"/>
</dbReference>
<dbReference type="GO" id="GO:0006882">
    <property type="term" value="P:intracellular zinc ion homeostasis"/>
    <property type="evidence" value="ECO:0000250"/>
    <property type="project" value="UniProtKB"/>
</dbReference>
<dbReference type="GO" id="GO:0033210">
    <property type="term" value="P:leptin-mediated signaling pathway"/>
    <property type="evidence" value="ECO:0000250"/>
    <property type="project" value="UniProtKB"/>
</dbReference>
<dbReference type="GO" id="GO:0030517">
    <property type="term" value="P:negative regulation of axon extension"/>
    <property type="evidence" value="ECO:0000250"/>
    <property type="project" value="UniProtKB"/>
</dbReference>
<dbReference type="GO" id="GO:0030308">
    <property type="term" value="P:negative regulation of cell growth"/>
    <property type="evidence" value="ECO:0000250"/>
    <property type="project" value="UniProtKB"/>
</dbReference>
<dbReference type="GO" id="GO:0043524">
    <property type="term" value="P:negative regulation of neuron apoptotic process"/>
    <property type="evidence" value="ECO:0000250"/>
    <property type="project" value="UniProtKB"/>
</dbReference>
<dbReference type="GO" id="GO:0051354">
    <property type="term" value="P:negative regulation of oxidoreductase activity"/>
    <property type="evidence" value="ECO:0000250"/>
    <property type="project" value="UniProtKB"/>
</dbReference>
<dbReference type="GO" id="GO:0045893">
    <property type="term" value="P:positive regulation of DNA-templated transcription"/>
    <property type="evidence" value="ECO:0000250"/>
    <property type="project" value="UniProtKB"/>
</dbReference>
<dbReference type="GO" id="GO:0070374">
    <property type="term" value="P:positive regulation of ERK1 and ERK2 cascade"/>
    <property type="evidence" value="ECO:0000250"/>
    <property type="project" value="UniProtKB"/>
</dbReference>
<dbReference type="GO" id="GO:0010628">
    <property type="term" value="P:positive regulation of gene expression"/>
    <property type="evidence" value="ECO:0000250"/>
    <property type="project" value="UniProtKB"/>
</dbReference>
<dbReference type="GO" id="GO:2000376">
    <property type="term" value="P:positive regulation of oxygen metabolic process"/>
    <property type="evidence" value="ECO:0000250"/>
    <property type="project" value="UniProtKB"/>
</dbReference>
<dbReference type="GO" id="GO:0001934">
    <property type="term" value="P:positive regulation of protein phosphorylation"/>
    <property type="evidence" value="ECO:0000250"/>
    <property type="project" value="UniProtKB"/>
</dbReference>
<dbReference type="GO" id="GO:0030949">
    <property type="term" value="P:positive regulation of vascular endothelial growth factor receptor signaling pathway"/>
    <property type="evidence" value="ECO:0000250"/>
    <property type="project" value="UniProtKB"/>
</dbReference>
<dbReference type="GO" id="GO:0050821">
    <property type="term" value="P:protein stabilization"/>
    <property type="evidence" value="ECO:0000250"/>
    <property type="project" value="UniProtKB"/>
</dbReference>
<dbReference type="GO" id="GO:0032095">
    <property type="term" value="P:regulation of response to food"/>
    <property type="evidence" value="ECO:0000250"/>
    <property type="project" value="UniProtKB"/>
</dbReference>
<dbReference type="GO" id="GO:0019430">
    <property type="term" value="P:removal of superoxide radicals"/>
    <property type="evidence" value="ECO:0000250"/>
    <property type="project" value="UniProtKB"/>
</dbReference>
<dbReference type="GO" id="GO:0001666">
    <property type="term" value="P:response to hypoxia"/>
    <property type="evidence" value="ECO:0000250"/>
    <property type="project" value="UniProtKB"/>
</dbReference>
<dbReference type="GO" id="GO:0006829">
    <property type="term" value="P:zinc ion transport"/>
    <property type="evidence" value="ECO:0000250"/>
    <property type="project" value="UniProtKB"/>
</dbReference>
<dbReference type="FunFam" id="4.10.10.10:FF:000001">
    <property type="entry name" value="Metallothionein"/>
    <property type="match status" value="1"/>
</dbReference>
<dbReference type="Gene3D" id="4.10.10.10">
    <property type="entry name" value="Metallothionein Isoform II"/>
    <property type="match status" value="1"/>
</dbReference>
<dbReference type="InterPro" id="IPR017854">
    <property type="entry name" value="Metalthion_dom_sf"/>
</dbReference>
<dbReference type="InterPro" id="IPR023587">
    <property type="entry name" value="Metalthion_dom_sf_vert"/>
</dbReference>
<dbReference type="InterPro" id="IPR000006">
    <property type="entry name" value="Metalthion_vert"/>
</dbReference>
<dbReference type="InterPro" id="IPR018064">
    <property type="entry name" value="Metalthion_vert_metal_BS"/>
</dbReference>
<dbReference type="PANTHER" id="PTHR23299">
    <property type="entry name" value="METALLOTHIONEIN"/>
    <property type="match status" value="1"/>
</dbReference>
<dbReference type="PANTHER" id="PTHR23299:SF18">
    <property type="entry name" value="METALLOTHIONEIN-3"/>
    <property type="match status" value="1"/>
</dbReference>
<dbReference type="Pfam" id="PF00131">
    <property type="entry name" value="Metallothio"/>
    <property type="match status" value="1"/>
</dbReference>
<dbReference type="PRINTS" id="PR00860">
    <property type="entry name" value="MTVERTEBRATE"/>
</dbReference>
<dbReference type="SUPFAM" id="SSF57868">
    <property type="entry name" value="Metallothionein"/>
    <property type="match status" value="1"/>
</dbReference>
<dbReference type="PROSITE" id="PS00203">
    <property type="entry name" value="METALLOTHIONEIN_VRT"/>
    <property type="match status" value="1"/>
</dbReference>
<accession>Q2PFZ0</accession>
<proteinExistence type="inferred from homology"/>